<gene>
    <name evidence="1" type="primary">recR</name>
    <name type="ordered locus">VCM66_1011</name>
</gene>
<sequence length="200" mass="21841">MRTSHMLEHLMEALRCLPGVGPKSAQRMAFHLLQRDRKGGLQLAEALSQAMVEIGHCQECRTFTEQDVCHICSNPKRKENGQLCVVESPADIAALEATGQFSGRYFVLMGHLSPLDGIGPSDIGLDTLDYRLQRGDISEVILATNPTVEGEATAQYIAELCREHQVTASRIAHGVPVGGELELVDGTTLSHSLLGRHKLF</sequence>
<reference key="1">
    <citation type="journal article" date="2008" name="PLoS ONE">
        <title>A recalibrated molecular clock and independent origins for the cholera pandemic clones.</title>
        <authorList>
            <person name="Feng L."/>
            <person name="Reeves P.R."/>
            <person name="Lan R."/>
            <person name="Ren Y."/>
            <person name="Gao C."/>
            <person name="Zhou Z."/>
            <person name="Ren Y."/>
            <person name="Cheng J."/>
            <person name="Wang W."/>
            <person name="Wang J."/>
            <person name="Qian W."/>
            <person name="Li D."/>
            <person name="Wang L."/>
        </authorList>
    </citation>
    <scope>NUCLEOTIDE SEQUENCE [LARGE SCALE GENOMIC DNA]</scope>
    <source>
        <strain>M66-2</strain>
    </source>
</reference>
<organism>
    <name type="scientific">Vibrio cholerae serotype O1 (strain M66-2)</name>
    <dbReference type="NCBI Taxonomy" id="579112"/>
    <lineage>
        <taxon>Bacteria</taxon>
        <taxon>Pseudomonadati</taxon>
        <taxon>Pseudomonadota</taxon>
        <taxon>Gammaproteobacteria</taxon>
        <taxon>Vibrionales</taxon>
        <taxon>Vibrionaceae</taxon>
        <taxon>Vibrio</taxon>
    </lineage>
</organism>
<accession>C3LTV3</accession>
<comment type="function">
    <text evidence="1">May play a role in DNA repair. It seems to be involved in an RecBC-independent recombinational process of DNA repair. It may act with RecF and RecO.</text>
</comment>
<comment type="similarity">
    <text evidence="1">Belongs to the RecR family.</text>
</comment>
<keyword id="KW-0227">DNA damage</keyword>
<keyword id="KW-0233">DNA recombination</keyword>
<keyword id="KW-0234">DNA repair</keyword>
<keyword id="KW-0479">Metal-binding</keyword>
<keyword id="KW-0862">Zinc</keyword>
<keyword id="KW-0863">Zinc-finger</keyword>
<proteinExistence type="inferred from homology"/>
<dbReference type="EMBL" id="CP001233">
    <property type="protein sequence ID" value="ACP05329.1"/>
    <property type="molecule type" value="Genomic_DNA"/>
</dbReference>
<dbReference type="RefSeq" id="WP_001260579.1">
    <property type="nucleotide sequence ID" value="NC_012578.1"/>
</dbReference>
<dbReference type="SMR" id="C3LTV3"/>
<dbReference type="GeneID" id="69720250"/>
<dbReference type="KEGG" id="vcm:VCM66_1011"/>
<dbReference type="HOGENOM" id="CLU_060739_1_2_6"/>
<dbReference type="Proteomes" id="UP000001217">
    <property type="component" value="Chromosome I"/>
</dbReference>
<dbReference type="GO" id="GO:0003677">
    <property type="term" value="F:DNA binding"/>
    <property type="evidence" value="ECO:0007669"/>
    <property type="project" value="UniProtKB-UniRule"/>
</dbReference>
<dbReference type="GO" id="GO:0008270">
    <property type="term" value="F:zinc ion binding"/>
    <property type="evidence" value="ECO:0007669"/>
    <property type="project" value="UniProtKB-KW"/>
</dbReference>
<dbReference type="GO" id="GO:0006310">
    <property type="term" value="P:DNA recombination"/>
    <property type="evidence" value="ECO:0007669"/>
    <property type="project" value="UniProtKB-UniRule"/>
</dbReference>
<dbReference type="GO" id="GO:0006281">
    <property type="term" value="P:DNA repair"/>
    <property type="evidence" value="ECO:0007669"/>
    <property type="project" value="UniProtKB-UniRule"/>
</dbReference>
<dbReference type="CDD" id="cd01025">
    <property type="entry name" value="TOPRIM_recR"/>
    <property type="match status" value="1"/>
</dbReference>
<dbReference type="FunFam" id="1.10.8.420:FF:000001">
    <property type="entry name" value="Recombination protein RecR"/>
    <property type="match status" value="1"/>
</dbReference>
<dbReference type="FunFam" id="3.40.1360.10:FF:000001">
    <property type="entry name" value="Recombination protein RecR"/>
    <property type="match status" value="1"/>
</dbReference>
<dbReference type="Gene3D" id="3.30.60.80">
    <property type="match status" value="1"/>
</dbReference>
<dbReference type="Gene3D" id="3.40.1360.10">
    <property type="match status" value="1"/>
</dbReference>
<dbReference type="Gene3D" id="6.10.250.240">
    <property type="match status" value="1"/>
</dbReference>
<dbReference type="Gene3D" id="1.10.8.420">
    <property type="entry name" value="RecR Domain 1"/>
    <property type="match status" value="1"/>
</dbReference>
<dbReference type="HAMAP" id="MF_00017">
    <property type="entry name" value="RecR"/>
    <property type="match status" value="1"/>
</dbReference>
<dbReference type="InterPro" id="IPR000093">
    <property type="entry name" value="DNA_Rcmb_RecR"/>
</dbReference>
<dbReference type="InterPro" id="IPR023627">
    <property type="entry name" value="Rcmb_RecR"/>
</dbReference>
<dbReference type="InterPro" id="IPR015967">
    <property type="entry name" value="Rcmb_RecR_Znf"/>
</dbReference>
<dbReference type="InterPro" id="IPR006171">
    <property type="entry name" value="TOPRIM_dom"/>
</dbReference>
<dbReference type="InterPro" id="IPR034137">
    <property type="entry name" value="TOPRIM_RecR"/>
</dbReference>
<dbReference type="NCBIfam" id="TIGR00615">
    <property type="entry name" value="recR"/>
    <property type="match status" value="1"/>
</dbReference>
<dbReference type="PANTHER" id="PTHR30446">
    <property type="entry name" value="RECOMBINATION PROTEIN RECR"/>
    <property type="match status" value="1"/>
</dbReference>
<dbReference type="PANTHER" id="PTHR30446:SF0">
    <property type="entry name" value="RECOMBINATION PROTEIN RECR"/>
    <property type="match status" value="1"/>
</dbReference>
<dbReference type="Pfam" id="PF21175">
    <property type="entry name" value="RecR_C"/>
    <property type="match status" value="1"/>
</dbReference>
<dbReference type="Pfam" id="PF21176">
    <property type="entry name" value="RecR_HhH"/>
    <property type="match status" value="1"/>
</dbReference>
<dbReference type="Pfam" id="PF02132">
    <property type="entry name" value="RecR_ZnF"/>
    <property type="match status" value="1"/>
</dbReference>
<dbReference type="Pfam" id="PF13662">
    <property type="entry name" value="Toprim_4"/>
    <property type="match status" value="1"/>
</dbReference>
<dbReference type="SMART" id="SM00493">
    <property type="entry name" value="TOPRIM"/>
    <property type="match status" value="1"/>
</dbReference>
<dbReference type="SUPFAM" id="SSF111304">
    <property type="entry name" value="Recombination protein RecR"/>
    <property type="match status" value="1"/>
</dbReference>
<dbReference type="PROSITE" id="PS50880">
    <property type="entry name" value="TOPRIM"/>
    <property type="match status" value="1"/>
</dbReference>
<protein>
    <recommendedName>
        <fullName evidence="1">Recombination protein RecR</fullName>
    </recommendedName>
</protein>
<evidence type="ECO:0000255" key="1">
    <source>
        <dbReference type="HAMAP-Rule" id="MF_00017"/>
    </source>
</evidence>
<feature type="chain" id="PRO_1000195418" description="Recombination protein RecR">
    <location>
        <begin position="1"/>
        <end position="200"/>
    </location>
</feature>
<feature type="domain" description="Toprim" evidence="1">
    <location>
        <begin position="81"/>
        <end position="176"/>
    </location>
</feature>
<feature type="zinc finger region" description="C4-type" evidence="1">
    <location>
        <begin position="57"/>
        <end position="72"/>
    </location>
</feature>
<name>RECR_VIBCM</name>